<reference key="1">
    <citation type="journal article" date="1996" name="Cell">
        <title>The FHIT gene, spanning the chromosome 3p14.2 fragile site and renal carcinoma-associated t(3;8) breakpoint, is abnormal in digestive tract cancers.</title>
        <authorList>
            <person name="Ohta M."/>
            <person name="Inoue H."/>
            <person name="Cotticelli M.G."/>
            <person name="Kastury K."/>
            <person name="Baffa R."/>
            <person name="Palazzo J."/>
            <person name="Siprashvili Z."/>
            <person name="Mori M."/>
            <person name="McCue P."/>
            <person name="Druck T."/>
            <person name="Croce C.M."/>
            <person name="Huebner K."/>
        </authorList>
    </citation>
    <scope>NUCLEOTIDE SEQUENCE [GENOMIC DNA / MRNA]</scope>
</reference>
<reference key="2">
    <citation type="journal article" date="1997" name="Cancer Res.">
        <title>Structure and expression of the human FHIT gene in normal and tumor cells.</title>
        <authorList>
            <person name="Druck T."/>
            <person name="Hadaczek P."/>
            <person name="Fu T.B."/>
            <person name="Ohta M."/>
            <person name="Siprashvili Z."/>
            <person name="Baffa R."/>
            <person name="Negrini M."/>
            <person name="Kastury K."/>
            <person name="Veronese M.L."/>
            <person name="Rosen D."/>
            <person name="Rothstein J."/>
            <person name="McCue P."/>
            <person name="Cotticelli M.G."/>
            <person name="Inoue H."/>
            <person name="Croce C.M."/>
            <person name="Huebner K."/>
        </authorList>
    </citation>
    <scope>NUCLEOTIDE SEQUENCE [GENOMIC DNA]</scope>
</reference>
<reference key="3">
    <citation type="journal article" date="2014" name="Nat. Commun.">
        <title>Protein interaction network of alternatively spliced isoforms from brain links genetic risk factors for autism.</title>
        <authorList>
            <person name="Corominas R."/>
            <person name="Yang X."/>
            <person name="Lin G.N."/>
            <person name="Kang S."/>
            <person name="Shen Y."/>
            <person name="Ghamsari L."/>
            <person name="Broly M."/>
            <person name="Rodriguez M."/>
            <person name="Tam S."/>
            <person name="Wanamaker S.A."/>
            <person name="Fan C."/>
            <person name="Yi S."/>
            <person name="Tasan M."/>
            <person name="Lemmens I."/>
            <person name="Kuang X."/>
            <person name="Zhao N."/>
            <person name="Malhotra D."/>
            <person name="Michaelson J.J."/>
            <person name="Vacic V."/>
            <person name="Calderwood M.A."/>
            <person name="Roth F.P."/>
            <person name="Tavernier J."/>
            <person name="Horvath S."/>
            <person name="Salehi-Ashtiani K."/>
            <person name="Korkin D."/>
            <person name="Sebat J."/>
            <person name="Hill D.E."/>
            <person name="Hao T."/>
            <person name="Vidal M."/>
            <person name="Iakoucheva L.M."/>
        </authorList>
    </citation>
    <scope>NUCLEOTIDE SEQUENCE [MRNA]</scope>
</reference>
<reference key="4">
    <citation type="submission" date="2005-07" db="EMBL/GenBank/DDBJ databases">
        <title>Mutational analysis of FHIT gene.</title>
        <authorList>
            <person name="Naqvi S.R.A."/>
            <person name="Malik A."/>
            <person name="Kukreti H."/>
            <person name="Chaudhary A."/>
            <person name="Anand R."/>
            <person name="Deo S.S."/>
            <person name="Shukla N.K."/>
            <person name="Husain S.A."/>
            <person name="Pasha S.T."/>
        </authorList>
    </citation>
    <scope>NUCLEOTIDE SEQUENCE [MRNA]</scope>
    <scope>NUCLEOTIDE SEQUENCE [GENOMIC DNA] OF 94-146</scope>
</reference>
<reference key="5">
    <citation type="journal article" date="2004" name="Nat. Genet.">
        <title>Complete sequencing and characterization of 21,243 full-length human cDNAs.</title>
        <authorList>
            <person name="Ota T."/>
            <person name="Suzuki Y."/>
            <person name="Nishikawa T."/>
            <person name="Otsuki T."/>
            <person name="Sugiyama T."/>
            <person name="Irie R."/>
            <person name="Wakamatsu A."/>
            <person name="Hayashi K."/>
            <person name="Sato H."/>
            <person name="Nagai K."/>
            <person name="Kimura K."/>
            <person name="Makita H."/>
            <person name="Sekine M."/>
            <person name="Obayashi M."/>
            <person name="Nishi T."/>
            <person name="Shibahara T."/>
            <person name="Tanaka T."/>
            <person name="Ishii S."/>
            <person name="Yamamoto J."/>
            <person name="Saito K."/>
            <person name="Kawai Y."/>
            <person name="Isono Y."/>
            <person name="Nakamura Y."/>
            <person name="Nagahari K."/>
            <person name="Murakami K."/>
            <person name="Yasuda T."/>
            <person name="Iwayanagi T."/>
            <person name="Wagatsuma M."/>
            <person name="Shiratori A."/>
            <person name="Sudo H."/>
            <person name="Hosoiri T."/>
            <person name="Kaku Y."/>
            <person name="Kodaira H."/>
            <person name="Kondo H."/>
            <person name="Sugawara M."/>
            <person name="Takahashi M."/>
            <person name="Kanda K."/>
            <person name="Yokoi T."/>
            <person name="Furuya T."/>
            <person name="Kikkawa E."/>
            <person name="Omura Y."/>
            <person name="Abe K."/>
            <person name="Kamihara K."/>
            <person name="Katsuta N."/>
            <person name="Sato K."/>
            <person name="Tanikawa M."/>
            <person name="Yamazaki M."/>
            <person name="Ninomiya K."/>
            <person name="Ishibashi T."/>
            <person name="Yamashita H."/>
            <person name="Murakawa K."/>
            <person name="Fujimori K."/>
            <person name="Tanai H."/>
            <person name="Kimata M."/>
            <person name="Watanabe M."/>
            <person name="Hiraoka S."/>
            <person name="Chiba Y."/>
            <person name="Ishida S."/>
            <person name="Ono Y."/>
            <person name="Takiguchi S."/>
            <person name="Watanabe S."/>
            <person name="Yosida M."/>
            <person name="Hotuta T."/>
            <person name="Kusano J."/>
            <person name="Kanehori K."/>
            <person name="Takahashi-Fujii A."/>
            <person name="Hara H."/>
            <person name="Tanase T.-O."/>
            <person name="Nomura Y."/>
            <person name="Togiya S."/>
            <person name="Komai F."/>
            <person name="Hara R."/>
            <person name="Takeuchi K."/>
            <person name="Arita M."/>
            <person name="Imose N."/>
            <person name="Musashino K."/>
            <person name="Yuuki H."/>
            <person name="Oshima A."/>
            <person name="Sasaki N."/>
            <person name="Aotsuka S."/>
            <person name="Yoshikawa Y."/>
            <person name="Matsunawa H."/>
            <person name="Ichihara T."/>
            <person name="Shiohata N."/>
            <person name="Sano S."/>
            <person name="Moriya S."/>
            <person name="Momiyama H."/>
            <person name="Satoh N."/>
            <person name="Takami S."/>
            <person name="Terashima Y."/>
            <person name="Suzuki O."/>
            <person name="Nakagawa S."/>
            <person name="Senoh A."/>
            <person name="Mizoguchi H."/>
            <person name="Goto Y."/>
            <person name="Shimizu F."/>
            <person name="Wakebe H."/>
            <person name="Hishigaki H."/>
            <person name="Watanabe T."/>
            <person name="Sugiyama A."/>
            <person name="Takemoto M."/>
            <person name="Kawakami B."/>
            <person name="Yamazaki M."/>
            <person name="Watanabe K."/>
            <person name="Kumagai A."/>
            <person name="Itakura S."/>
            <person name="Fukuzumi Y."/>
            <person name="Fujimori Y."/>
            <person name="Komiyama M."/>
            <person name="Tashiro H."/>
            <person name="Tanigami A."/>
            <person name="Fujiwara T."/>
            <person name="Ono T."/>
            <person name="Yamada K."/>
            <person name="Fujii Y."/>
            <person name="Ozaki K."/>
            <person name="Hirao M."/>
            <person name="Ohmori Y."/>
            <person name="Kawabata A."/>
            <person name="Hikiji T."/>
            <person name="Kobatake N."/>
            <person name="Inagaki H."/>
            <person name="Ikema Y."/>
            <person name="Okamoto S."/>
            <person name="Okitani R."/>
            <person name="Kawakami T."/>
            <person name="Noguchi S."/>
            <person name="Itoh T."/>
            <person name="Shigeta K."/>
            <person name="Senba T."/>
            <person name="Matsumura K."/>
            <person name="Nakajima Y."/>
            <person name="Mizuno T."/>
            <person name="Morinaga M."/>
            <person name="Sasaki M."/>
            <person name="Togashi T."/>
            <person name="Oyama M."/>
            <person name="Hata H."/>
            <person name="Watanabe M."/>
            <person name="Komatsu T."/>
            <person name="Mizushima-Sugano J."/>
            <person name="Satoh T."/>
            <person name="Shirai Y."/>
            <person name="Takahashi Y."/>
            <person name="Nakagawa K."/>
            <person name="Okumura K."/>
            <person name="Nagase T."/>
            <person name="Nomura N."/>
            <person name="Kikuchi H."/>
            <person name="Masuho Y."/>
            <person name="Yamashita R."/>
            <person name="Nakai K."/>
            <person name="Yada T."/>
            <person name="Nakamura Y."/>
            <person name="Ohara O."/>
            <person name="Isogai T."/>
            <person name="Sugano S."/>
        </authorList>
    </citation>
    <scope>NUCLEOTIDE SEQUENCE [LARGE SCALE MRNA]</scope>
    <source>
        <tissue>Brain</tissue>
    </source>
</reference>
<reference key="6">
    <citation type="submission" date="2005-07" db="EMBL/GenBank/DDBJ databases">
        <authorList>
            <person name="Mural R.J."/>
            <person name="Istrail S."/>
            <person name="Sutton G."/>
            <person name="Florea L."/>
            <person name="Halpern A.L."/>
            <person name="Mobarry C.M."/>
            <person name="Lippert R."/>
            <person name="Walenz B."/>
            <person name="Shatkay H."/>
            <person name="Dew I."/>
            <person name="Miller J.R."/>
            <person name="Flanigan M.J."/>
            <person name="Edwards N.J."/>
            <person name="Bolanos R."/>
            <person name="Fasulo D."/>
            <person name="Halldorsson B.V."/>
            <person name="Hannenhalli S."/>
            <person name="Turner R."/>
            <person name="Yooseph S."/>
            <person name="Lu F."/>
            <person name="Nusskern D.R."/>
            <person name="Shue B.C."/>
            <person name="Zheng X.H."/>
            <person name="Zhong F."/>
            <person name="Delcher A.L."/>
            <person name="Huson D.H."/>
            <person name="Kravitz S.A."/>
            <person name="Mouchard L."/>
            <person name="Reinert K."/>
            <person name="Remington K.A."/>
            <person name="Clark A.G."/>
            <person name="Waterman M.S."/>
            <person name="Eichler E.E."/>
            <person name="Adams M.D."/>
            <person name="Hunkapiller M.W."/>
            <person name="Myers E.W."/>
            <person name="Venter J.C."/>
        </authorList>
    </citation>
    <scope>NUCLEOTIDE SEQUENCE [LARGE SCALE GENOMIC DNA]</scope>
</reference>
<reference key="7">
    <citation type="journal article" date="2004" name="Genome Res.">
        <title>The status, quality, and expansion of the NIH full-length cDNA project: the Mammalian Gene Collection (MGC).</title>
        <authorList>
            <consortium name="The MGC Project Team"/>
        </authorList>
    </citation>
    <scope>NUCLEOTIDE SEQUENCE [LARGE SCALE MRNA]</scope>
    <source>
        <tissue>Colon</tissue>
    </source>
</reference>
<reference key="8">
    <citation type="journal article" date="1996" name="Biochemistry">
        <title>Fhit, a putative tumor suppressor in humans, is a dinucleoside 5',5''-P1,P3-triphosphate hydrolase.</title>
        <authorList>
            <person name="Barnes L.D."/>
            <person name="Garrison P.N."/>
            <person name="Siprashvili Z."/>
            <person name="Guranowski A."/>
            <person name="Robinson A.K."/>
            <person name="Ingram S.W."/>
            <person name="Croce C.M."/>
            <person name="Ohta M."/>
            <person name="Huebner K."/>
        </authorList>
    </citation>
    <scope>FUNCTION</scope>
    <scope>CATALYTIC ACTIVITY</scope>
    <scope>MUTAGENESIS OF HIS-35; HIS-94; HIS-96 AND HIS-98</scope>
</reference>
<reference key="9">
    <citation type="journal article" date="1997" name="Protein Eng.">
        <title>Purification and crystallization of complexes modeling the active state of the fragile histidine triad protein.</title>
        <authorList>
            <person name="Brenner C."/>
            <person name="Pace H.C."/>
            <person name="Garrison P.N."/>
            <person name="Robinson A.K."/>
            <person name="Rosler A."/>
            <person name="Liu X.H."/>
            <person name="Blackburn G.M."/>
            <person name="Croce C.M."/>
            <person name="Huebner K."/>
            <person name="Barnes L.D."/>
        </authorList>
    </citation>
    <scope>FUNCTION</scope>
    <scope>CATALYTIC ACTIVITY</scope>
    <scope>BIOPHYSICOCHEMICAL PROPERTIES</scope>
</reference>
<reference key="10">
    <citation type="journal article" date="1998" name="Proc. Natl. Acad. Sci. U.S.A.">
        <title>The hereditary renal cell carcinoma 3;8 translocation fuses FHIT to a patched-related gene, TRC8.</title>
        <authorList>
            <person name="Gemmill R.M."/>
            <person name="West J.D."/>
            <person name="Boldog F."/>
            <person name="Tanaka N."/>
            <person name="Robinson L.J."/>
            <person name="Smith D.I."/>
            <person name="Li F."/>
            <person name="Drabkin H.A."/>
        </authorList>
    </citation>
    <scope>CHROMOSOMAL TRANSLOCATION WITH RNF139</scope>
</reference>
<reference key="11">
    <citation type="journal article" date="2000" name="Biochem. J.">
        <title>Association of FHIT (fragile histidine triad), a candidate tumour suppressor gene, with the ubiquitin-conjugating enzyme hUBC9.</title>
        <authorList>
            <person name="Shi Y."/>
            <person name="Zou M."/>
            <person name="Farid N.R."/>
            <person name="Paterson M.C."/>
        </authorList>
    </citation>
    <scope>INTERACTION WITH UBE2I</scope>
</reference>
<reference key="12">
    <citation type="journal article" date="2003" name="Proc. Natl. Acad. Sci. U.S.A.">
        <title>Designed FHIT alleles establish that Fhit-induced apoptosis in cancer cells is limited by substrate binding.</title>
        <authorList>
            <person name="Trapasso F."/>
            <person name="Krakowiak A."/>
            <person name="Cesari R."/>
            <person name="Arkles J."/>
            <person name="Yendamuri S."/>
            <person name="Ishii H."/>
            <person name="Vecchione A."/>
            <person name="Kuroki T."/>
            <person name="Bieganowski P."/>
            <person name="Pace H.C."/>
            <person name="Huebner K."/>
            <person name="Croce C.M."/>
            <person name="Brenner C."/>
        </authorList>
    </citation>
    <scope>FUNCTION</scope>
    <scope>CATALYTIC ACTIVITY</scope>
    <scope>MUTAGENESIS OF ILE-10; LEU-25 AND HIS-96</scope>
</reference>
<reference key="13">
    <citation type="journal article" date="2004" name="Biochemistry">
        <title>The mechanism of action of the fragile histidine triad, Fhit: isolation of a covalent adenylyl enzyme and chemical rescue of H96G-Fhit.</title>
        <authorList>
            <person name="Huang K."/>
            <person name="Arabshahi A."/>
            <person name="Wei Y."/>
            <person name="Frey P.A."/>
        </authorList>
    </citation>
    <scope>ACTIVE SITE</scope>
    <scope>CATALYTIC ACTIVITY</scope>
    <scope>MUTAGENESIS OF HIS-96</scope>
    <scope>FUNCTION</scope>
</reference>
<reference key="14">
    <citation type="journal article" date="2004" name="Cancer Res.">
        <title>Synergistic tumor suppression by coexpression of FHIT and p53 coincides with FHIT-mediated MDM2 inactivation and p53 stabilization in human non-small cell lung cancer cells.</title>
        <authorList>
            <person name="Nishizaki M."/>
            <person name="Sasaki J."/>
            <person name="Fang B."/>
            <person name="Atkinson E.N."/>
            <person name="Minna J.D."/>
            <person name="Roth J.A."/>
            <person name="Ji L."/>
        </authorList>
    </citation>
    <scope>FUNCTION</scope>
    <scope>SUBCELLULAR LOCATION</scope>
    <scope>INTERACTION WITH MDM2</scope>
</reference>
<reference key="15">
    <citation type="journal article" date="2004" name="Proc. Natl. Acad. Sci. U.S.A.">
        <title>Fhit is a physiological target of the protein kinase Src.</title>
        <authorList>
            <person name="Pekarsky Y."/>
            <person name="Garrison P.N."/>
            <person name="Palamarchuk A."/>
            <person name="Zanesi N."/>
            <person name="Aqeilan R.I."/>
            <person name="Huebner K."/>
            <person name="Barnes L.D."/>
            <person name="Croce C.M."/>
        </authorList>
    </citation>
    <scope>PHOSPHORYLATION BY SRC</scope>
    <scope>SUBUNIT</scope>
    <scope>SUBCELLULAR LOCATION</scope>
    <scope>MASS SPECTROMETRY</scope>
    <scope>DISEASE</scope>
    <scope>PHOSPHORYLATION AT TYR-114 AND TYR-145</scope>
    <scope>MUTAGENESIS OF TYR-114 AND TYR-145</scope>
</reference>
<reference key="16">
    <citation type="journal article" date="2006" name="Oncogene">
        <title>Fhit modulation of the Akt-survivin pathway in lung cancer cells: Fhit-tyrosine 114 (Y114) is essential.</title>
        <authorList>
            <person name="Semba S."/>
            <person name="Trapasso F."/>
            <person name="Fabbri M."/>
            <person name="McCorkell K.A."/>
            <person name="Volinia S."/>
            <person name="Druck T."/>
            <person name="Iliopoulos D."/>
            <person name="Pekarsky Y."/>
            <person name="Ishii H."/>
            <person name="Garrison P.N."/>
            <person name="Barnes L.D."/>
            <person name="Croce C.M."/>
            <person name="Huebner K."/>
        </authorList>
    </citation>
    <scope>MUTAGENESIS OF TYR-114</scope>
    <scope>FUNCTION</scope>
    <scope>SITE</scope>
</reference>
<reference key="17">
    <citation type="journal article" date="2007" name="Proc. Natl. Acad. Sci. U.S.A.">
        <title>The tumor suppressor Fhit acts as a repressor of beta-catenin transcriptional activity.</title>
        <authorList>
            <person name="Weiske J."/>
            <person name="Albring K.F."/>
            <person name="Huber O."/>
        </authorList>
    </citation>
    <scope>INTERACTION WITH CTNNB1</scope>
    <scope>IDENTIFICATION IN A COMPLEX WITH CTNNB1 AND LEF1</scope>
    <scope>FUNCTION</scope>
</reference>
<reference key="18">
    <citation type="journal article" date="2008" name="FEBS Lett.">
        <title>Fhit proteins can also recognize substrates other than dinucleoside polyphosphates.</title>
        <authorList>
            <person name="Guranowski A."/>
            <person name="Wojdyla A.M."/>
            <person name="Pietrowska-Borek M."/>
            <person name="Bieganowski P."/>
            <person name="Khurs E.N."/>
            <person name="Cliff M.J."/>
            <person name="Blackburn G.M."/>
            <person name="Blaziak D."/>
            <person name="Stec W.J."/>
        </authorList>
    </citation>
    <scope>FUNCTION</scope>
    <scope>CATALYTIC ACTIVITY</scope>
    <scope>BIOPHYSICOCHEMICAL PROPERTIES</scope>
</reference>
<reference key="19">
    <citation type="journal article" date="2009" name="Proc. Natl. Acad. Sci. U.S.A.">
        <title>Intramitochondrial calcium regulation by the FHIT gene product sensitizes to apoptosis.</title>
        <authorList>
            <person name="Rimessi A."/>
            <person name="Marchi S."/>
            <person name="Fotino C."/>
            <person name="Romagnoli A."/>
            <person name="Huebner K."/>
            <person name="Croce C.M."/>
            <person name="Pinton P."/>
            <person name="Rizzuto R."/>
        </authorList>
    </citation>
    <scope>SUBCELLULAR LOCATION</scope>
    <scope>FUNCTION IN APOPTOSIS</scope>
</reference>
<reference key="20">
    <citation type="journal article" date="2011" name="BMC Syst. Biol.">
        <title>Initial characterization of the human central proteome.</title>
        <authorList>
            <person name="Burkard T.R."/>
            <person name="Planyavsky M."/>
            <person name="Kaupe I."/>
            <person name="Breitwieser F.P."/>
            <person name="Buerckstuemmer T."/>
            <person name="Bennett K.L."/>
            <person name="Superti-Furga G."/>
            <person name="Colinge J."/>
        </authorList>
    </citation>
    <scope>IDENTIFICATION BY MASS SPECTROMETRY [LARGE SCALE ANALYSIS]</scope>
</reference>
<reference key="21">
    <citation type="journal article" date="2015" name="Biosci. Rep.">
        <title>Adenylylsulfate-ammonia adenylyltransferase activity is another inherent property of Fhit proteins.</title>
        <authorList>
            <person name="Wojdyla-Mamon A.M."/>
            <person name="Guranowski A."/>
        </authorList>
    </citation>
    <scope>FUNCTION</scope>
    <scope>CATALYTIC ACTIVITY</scope>
    <scope>BIOPHYSICOCHEMICAL PROPERTIES</scope>
</reference>
<reference key="22">
    <citation type="journal article" date="1997" name="Structure">
        <title>MAD analysis of FHIT, a putative human tumor suppressor from the HIT protein family.</title>
        <authorList>
            <person name="Lima C.D."/>
            <person name="D'Amico K.L."/>
            <person name="Naday I."/>
            <person name="Rosenbaum G."/>
            <person name="Westbrook E.M."/>
            <person name="Hendrickson W.A."/>
        </authorList>
    </citation>
    <scope>X-RAY CRYSTALLOGRAPHY (1.85 ANGSTROMS)</scope>
</reference>
<reference key="23">
    <citation type="journal article" date="1997" name="Science">
        <title>Structure-based analysis of catalysis and substrate definition in the HIT protein family.</title>
        <authorList>
            <person name="Lima C.D."/>
            <person name="Klein M.G."/>
            <person name="Hendrickson W.A."/>
        </authorList>
    </citation>
    <scope>X-RAY CRYSTALLOGRAPHY (2.3 ANGSTROMS) IN COMPLEXES WITH SUBSTRATES</scope>
    <scope>CATALYTIC ACTIVITY</scope>
    <scope>FUNCTION</scope>
    <scope>SUBUNIT</scope>
    <scope>ACTIVE SITE</scope>
</reference>
<reference key="24">
    <citation type="journal article" date="1998" name="Proc. Natl. Acad. Sci. U.S.A.">
        <title>Genetic, biochemical, and crystallographic characterization of Fhit-substrate complexes as the active signaling form of Fhit.</title>
        <authorList>
            <person name="Pace H.C."/>
            <person name="Garrison P.N."/>
            <person name="Robinson A.K."/>
            <person name="Barnes L.D."/>
            <person name="Draganescu A."/>
            <person name="Roesler A."/>
            <person name="Blackburn G.M."/>
            <person name="Siprashvili Z."/>
            <person name="Croce C.M."/>
            <person name="Huebner K."/>
            <person name="Brenner C."/>
        </authorList>
    </citation>
    <scope>X-RAY CRYSTALLOGRAPHY (2.6 ANGSTROMS) IN COMPLEXES WITH SUBSTRATE ANALOGS</scope>
    <scope>SUBUNIT</scope>
    <scope>CATALYTIC ACTIVITY</scope>
    <scope>MUTAGENESIS OF HIS-96</scope>
    <scope>FUNCTION</scope>
</reference>
<organism>
    <name type="scientific">Homo sapiens</name>
    <name type="common">Human</name>
    <dbReference type="NCBI Taxonomy" id="9606"/>
    <lineage>
        <taxon>Eukaryota</taxon>
        <taxon>Metazoa</taxon>
        <taxon>Chordata</taxon>
        <taxon>Craniata</taxon>
        <taxon>Vertebrata</taxon>
        <taxon>Euteleostomi</taxon>
        <taxon>Mammalia</taxon>
        <taxon>Eutheria</taxon>
        <taxon>Euarchontoglires</taxon>
        <taxon>Primates</taxon>
        <taxon>Haplorrhini</taxon>
        <taxon>Catarrhini</taxon>
        <taxon>Hominidae</taxon>
        <taxon>Homo</taxon>
    </lineage>
</organism>
<gene>
    <name type="primary">FHIT</name>
</gene>
<sequence length="147" mass="16858">MSFRFGQHLIKPSVVFLKTELSFALVNRKPVVPGHVLVCPLRPVERFHDLRPDEVADLFQTTQRVGTVVEKHFHGTSLTFSMQDGPEAGQTVKHVHVHVLPRKAGDFHRNDSIYEELQKHDKEDFPASWRSEEEMAAEAAALRVYFQ</sequence>
<feature type="chain" id="PRO_0000109789" description="Bis(5'-adenosyl)-triphosphatase">
    <location>
        <begin position="1"/>
        <end position="147"/>
    </location>
</feature>
<feature type="domain" description="HIT" evidence="2">
    <location>
        <begin position="2"/>
        <end position="109"/>
    </location>
</feature>
<feature type="short sequence motif" description="Histidine triad motif" evidence="2">
    <location>
        <begin position="94"/>
        <end position="98"/>
    </location>
</feature>
<feature type="active site" description="Tele-AMP-histidine intermediate" evidence="6 15">
    <location>
        <position position="96"/>
    </location>
</feature>
<feature type="binding site" evidence="14 20">
    <location>
        <position position="8"/>
    </location>
    <ligand>
        <name>substrate</name>
    </ligand>
</feature>
<feature type="binding site" evidence="15 21">
    <location>
        <position position="27"/>
    </location>
    <ligand>
        <name>substrate</name>
    </ligand>
</feature>
<feature type="binding site" evidence="15 21">
    <location>
        <position position="83"/>
    </location>
    <ligand>
        <name>substrate</name>
    </ligand>
</feature>
<feature type="binding site" evidence="15 21">
    <location>
        <begin position="89"/>
        <end position="92"/>
    </location>
    <ligand>
        <name>substrate</name>
    </ligand>
</feature>
<feature type="binding site" evidence="15 21">
    <location>
        <position position="98"/>
    </location>
    <ligand>
        <name>substrate</name>
    </ligand>
</feature>
<feature type="site" description="Important for induction of apoptosis" evidence="8">
    <location>
        <position position="114"/>
    </location>
</feature>
<feature type="modified residue" description="Phosphotyrosine; by SRC" evidence="5">
    <location>
        <position position="114"/>
    </location>
</feature>
<feature type="modified residue" description="Phosphotyrosine" evidence="5">
    <location>
        <position position="145"/>
    </location>
</feature>
<feature type="mutagenesis site" description="Strongly reduces affinity for substrates and impairs apoptosis; when associated with W-25." evidence="4">
    <original>I</original>
    <variation>W</variation>
    <location>
        <position position="10"/>
    </location>
</feature>
<feature type="mutagenesis site" description="Reduces affinity for substrates and impairs apoptosis. Strongly reduces affinity for substrates and impairs apoptosis; when associated with W-10." evidence="4">
    <original>L</original>
    <variation>W</variation>
    <location>
        <position position="25"/>
    </location>
</feature>
<feature type="mutagenesis site" description="50% decrease in catalytic activity. No loss in substrate binding." evidence="13">
    <original>H</original>
    <variation>N</variation>
    <location>
        <position position="35"/>
    </location>
</feature>
<feature type="mutagenesis site" description="75% decrease in catalytic activity. No loss in substrate binding." evidence="13">
    <original>H</original>
    <variation>N</variation>
    <location>
        <position position="94"/>
    </location>
</feature>
<feature type="mutagenesis site" description="Loss of catalytic activity." evidence="4 6 13 17">
    <original>H</original>
    <variation>D</variation>
    <location>
        <position position="96"/>
    </location>
</feature>
<feature type="mutagenesis site" description="Total loss of catalytic activity. Rescuable with free imidazole." evidence="4 6 13 17">
    <original>H</original>
    <variation>G</variation>
    <location>
        <position position="96"/>
    </location>
</feature>
<feature type="mutagenesis site" description="Total loss of catalytic activity. No loss in substrate binding." evidence="4 6 13 17">
    <original>H</original>
    <variation>N</variation>
    <location>
        <position position="96"/>
    </location>
</feature>
<feature type="mutagenesis site" description="98% decrease in catalytic activity." evidence="13">
    <original>H</original>
    <variation>N</variation>
    <location>
        <position position="98"/>
    </location>
</feature>
<feature type="mutagenesis site" description="Impairs induction of apoptosis. Strongly reduced affinity for substrates." evidence="5 8">
    <original>Y</original>
    <variation>A</variation>
    <location>
        <position position="114"/>
    </location>
</feature>
<feature type="mutagenesis site" description="Impairs induction of apoptosis. Reduces affinity for substrates." evidence="5 8">
    <original>Y</original>
    <variation>D</variation>
    <location>
        <position position="114"/>
    </location>
</feature>
<feature type="mutagenesis site" description="Loss of phosphorylation by SRC. Impairs induction of apoptosis." evidence="5 8">
    <original>Y</original>
    <variation>F</variation>
    <location>
        <position position="114"/>
    </location>
</feature>
<feature type="mutagenesis site" description="No effect on phosphorylation by SRC." evidence="5">
    <original>Y</original>
    <variation>F</variation>
    <location>
        <position position="145"/>
    </location>
</feature>
<feature type="sequence conflict" description="In Ref. 5; BAF82513." evidence="18" ref="5">
    <original>F</original>
    <variation>S</variation>
    <location>
        <position position="146"/>
    </location>
</feature>
<feature type="strand" evidence="22">
    <location>
        <begin position="3"/>
        <end position="5"/>
    </location>
</feature>
<feature type="strand" evidence="22">
    <location>
        <begin position="8"/>
        <end position="10"/>
    </location>
</feature>
<feature type="helix" evidence="22">
    <location>
        <begin position="12"/>
        <end position="14"/>
    </location>
</feature>
<feature type="strand" evidence="22">
    <location>
        <begin position="15"/>
        <end position="18"/>
    </location>
</feature>
<feature type="strand" evidence="22">
    <location>
        <begin position="20"/>
        <end position="26"/>
    </location>
</feature>
<feature type="strand" evidence="22">
    <location>
        <begin position="36"/>
        <end position="42"/>
    </location>
</feature>
<feature type="helix" evidence="22">
    <location>
        <begin position="47"/>
        <end position="49"/>
    </location>
</feature>
<feature type="helix" evidence="22">
    <location>
        <begin position="52"/>
        <end position="72"/>
    </location>
</feature>
<feature type="strand" evidence="22">
    <location>
        <begin position="76"/>
        <end position="82"/>
    </location>
</feature>
<feature type="helix" evidence="22">
    <location>
        <begin position="86"/>
        <end position="88"/>
    </location>
</feature>
<feature type="strand" evidence="22">
    <location>
        <begin position="92"/>
        <end position="94"/>
    </location>
</feature>
<feature type="strand" evidence="22">
    <location>
        <begin position="97"/>
        <end position="102"/>
    </location>
</feature>
<feature type="helix" evidence="23">
    <location>
        <begin position="112"/>
        <end position="119"/>
    </location>
</feature>
<feature type="turn" evidence="23">
    <location>
        <begin position="120"/>
        <end position="123"/>
    </location>
</feature>
<feature type="helix" evidence="22">
    <location>
        <begin position="132"/>
        <end position="144"/>
    </location>
</feature>
<evidence type="ECO:0000250" key="1">
    <source>
        <dbReference type="UniProtKB" id="O89106"/>
    </source>
</evidence>
<evidence type="ECO:0000255" key="2">
    <source>
        <dbReference type="PROSITE-ProRule" id="PRU00464"/>
    </source>
</evidence>
<evidence type="ECO:0000269" key="3">
    <source>
    </source>
</evidence>
<evidence type="ECO:0000269" key="4">
    <source>
    </source>
</evidence>
<evidence type="ECO:0000269" key="5">
    <source>
    </source>
</evidence>
<evidence type="ECO:0000269" key="6">
    <source>
    </source>
</evidence>
<evidence type="ECO:0000269" key="7">
    <source>
    </source>
</evidence>
<evidence type="ECO:0000269" key="8">
    <source>
    </source>
</evidence>
<evidence type="ECO:0000269" key="9">
    <source>
    </source>
</evidence>
<evidence type="ECO:0000269" key="10">
    <source>
    </source>
</evidence>
<evidence type="ECO:0000269" key="11">
    <source>
    </source>
</evidence>
<evidence type="ECO:0000269" key="12">
    <source>
    </source>
</evidence>
<evidence type="ECO:0000269" key="13">
    <source>
    </source>
</evidence>
<evidence type="ECO:0000269" key="14">
    <source>
    </source>
</evidence>
<evidence type="ECO:0000269" key="15">
    <source>
    </source>
</evidence>
<evidence type="ECO:0000269" key="16">
    <source>
    </source>
</evidence>
<evidence type="ECO:0000269" key="17">
    <source>
    </source>
</evidence>
<evidence type="ECO:0000305" key="18"/>
<evidence type="ECO:0000305" key="19">
    <source>
    </source>
</evidence>
<evidence type="ECO:0007744" key="20">
    <source>
        <dbReference type="PDB" id="3FIT"/>
    </source>
</evidence>
<evidence type="ECO:0007744" key="21">
    <source>
        <dbReference type="PDB" id="5FIT"/>
    </source>
</evidence>
<evidence type="ECO:0007829" key="22">
    <source>
        <dbReference type="PDB" id="1FIT"/>
    </source>
</evidence>
<evidence type="ECO:0007829" key="23">
    <source>
        <dbReference type="PDB" id="7P8P"/>
    </source>
</evidence>
<keyword id="KW-0002">3D-structure</keyword>
<keyword id="KW-0053">Apoptosis</keyword>
<keyword id="KW-0160">Chromosomal rearrangement</keyword>
<keyword id="KW-0963">Cytoplasm</keyword>
<keyword id="KW-0378">Hydrolase</keyword>
<keyword id="KW-0464">Manganese</keyword>
<keyword id="KW-0496">Mitochondrion</keyword>
<keyword id="KW-0547">Nucleotide-binding</keyword>
<keyword id="KW-0539">Nucleus</keyword>
<keyword id="KW-0597">Phosphoprotein</keyword>
<keyword id="KW-1267">Proteomics identification</keyword>
<keyword id="KW-1185">Reference proteome</keyword>
<keyword id="KW-0804">Transcription</keyword>
<keyword id="KW-0805">Transcription regulation</keyword>
<keyword id="KW-0808">Transferase</keyword>
<keyword id="KW-0043">Tumor suppressor</keyword>
<name>FHIT_HUMAN</name>
<comment type="function">
    <text evidence="1 4 7 8 9 10 11 12 13 15 16">Possesses dinucleoside triphosphate hydrolase activity (PubMed:12574506, PubMed:15182206, PubMed:8794732, PubMed:9323207, PubMed:9543008, PubMed:9576908). Cleaves P(1)-P(3)-bis(5'-adenosyl) triphosphate (Ap3A) to yield AMP and ADP (PubMed:12574506, PubMed:15182206, PubMed:8794732, PubMed:9323207, PubMed:9543008, PubMed:9576908). Can also hydrolyze P(1)-P(4)-bis(5'-adenosyl) tetraphosphate (Ap4A), but has extremely low activity with ATP (PubMed:8794732). Exhibits adenylylsulfatase activity, hydrolyzing adenosine 5'-phosphosulfate to yield AMP and sulfate (PubMed:18694747). Exhibits adenosine 5'-monophosphoramidase activity, hydrolyzing purine nucleotide phosphoramidates with a single phosphate group such as adenosine 5'monophosphoramidate (AMP-NH2) to yield AMP and NH2 (PubMed:18694747). Exhibits adenylylsulfate-ammonia adenylyltransferase, catalyzing the ammonolysis of adenosine 5'-phosphosulfate resulting in the formation of adenosine 5'-phosphoramidate (PubMed:26181368). Also catalyzes the ammonolysis of adenosine 5-phosphorofluoridate and diadenosine triphosphate (PubMed:26181368). Modulates transcriptional activation by CTNNB1 and thereby contributes to regulate the expression of genes essential for cell proliferation and survival, such as CCND1 and BIRC5 (PubMed:18077326). Plays a role in the induction of apoptosis via SRC and AKT1 signaling pathways (PubMed:16407838). Inhibits MDM2-mediated proteasomal degradation of p53/TP53 and thereby plays a role in p53/TP53-mediated apoptosis (PubMed:15313915). Induction of apoptosis depends on the ability of FHIT to bind P(1)-P(3)-bis(5'-adenosyl) triphosphate or related compounds, but does not require its catalytic activity, it may in part come from the mitochondrial form, which sensitizes the low-affinity Ca(2+) transporters, enhancing mitochondrial calcium uptake (PubMed:12574506, PubMed:19622739). Functions as a tumor suppressor (By similarity).</text>
</comment>
<comment type="catalytic activity">
    <reaction evidence="4 6 13 15 16 17">
        <text>P(1),P(3)-bis(5'-adenosyl) triphosphate + H2O = AMP + ADP + 2 H(+)</text>
        <dbReference type="Rhea" id="RHEA:13893"/>
        <dbReference type="ChEBI" id="CHEBI:15377"/>
        <dbReference type="ChEBI" id="CHEBI:15378"/>
        <dbReference type="ChEBI" id="CHEBI:58529"/>
        <dbReference type="ChEBI" id="CHEBI:456215"/>
        <dbReference type="ChEBI" id="CHEBI:456216"/>
        <dbReference type="EC" id="3.6.1.29"/>
    </reaction>
</comment>
<comment type="catalytic activity">
    <reaction evidence="10">
        <text>adenosine 5'-phosphosulfate + H2O = sulfate + AMP + 2 H(+)</text>
        <dbReference type="Rhea" id="RHEA:17041"/>
        <dbReference type="ChEBI" id="CHEBI:15377"/>
        <dbReference type="ChEBI" id="CHEBI:15378"/>
        <dbReference type="ChEBI" id="CHEBI:16189"/>
        <dbReference type="ChEBI" id="CHEBI:58243"/>
        <dbReference type="ChEBI" id="CHEBI:456215"/>
        <dbReference type="EC" id="3.6.2.1"/>
    </reaction>
</comment>
<comment type="catalytic activity">
    <reaction evidence="12">
        <text>adenosine 5'-phosphosulfate + NH4(+) = adenosine 5'-phosphoramidate + sulfate + 2 H(+)</text>
        <dbReference type="Rhea" id="RHEA:19197"/>
        <dbReference type="ChEBI" id="CHEBI:15378"/>
        <dbReference type="ChEBI" id="CHEBI:16189"/>
        <dbReference type="ChEBI" id="CHEBI:28938"/>
        <dbReference type="ChEBI" id="CHEBI:57890"/>
        <dbReference type="ChEBI" id="CHEBI:58243"/>
        <dbReference type="EC" id="2.7.7.51"/>
    </reaction>
</comment>
<comment type="catalytic activity">
    <reaction evidence="10">
        <text>adenosine 5'-phosphoramidate + H2O = AMP + NH4(+)</text>
        <dbReference type="Rhea" id="RHEA:67916"/>
        <dbReference type="ChEBI" id="CHEBI:15377"/>
        <dbReference type="ChEBI" id="CHEBI:28938"/>
        <dbReference type="ChEBI" id="CHEBI:57890"/>
        <dbReference type="ChEBI" id="CHEBI:456215"/>
    </reaction>
</comment>
<comment type="biophysicochemical properties">
    <kinetics>
        <KM evidence="16">1.9 uM for P(1)-P(3)-bis(5'-adenosyl) triphosphate</KM>
        <KM evidence="10">3 uM for adenosine 5'-phosphoramidate (at pH 6.8)</KM>
        <KM evidence="12">2.4 mM for adenosine 5'-phosphosulfate</KM>
        <KM evidence="12">1.6 mM for adenosine-phosphorofluoridate</KM>
    </kinetics>
</comment>
<comment type="subunit">
    <text evidence="3 5 7 9 15 17">Homodimer. Interacts with UBE2I. Interacts with MDM2. Interacts with CTNNB1. Identified in a complex with CTNNB1 and LEF1.</text>
</comment>
<comment type="interaction">
    <interactant intactId="EBI-741760">
        <id>P49789</id>
    </interactant>
    <interactant intactId="EBI-491549">
        <id>P35222</id>
        <label>CTNNB1</label>
    </interactant>
    <organismsDiffer>false</organismsDiffer>
    <experiments>4</experiments>
</comment>
<comment type="interaction">
    <interactant intactId="EBI-741760">
        <id>P49789</id>
    </interactant>
    <interactant intactId="EBI-742054">
        <id>Q96D03</id>
        <label>DDIT4L</label>
    </interactant>
    <organismsDiffer>false</organismsDiffer>
    <experiments>3</experiments>
</comment>
<comment type="interaction">
    <interactant intactId="EBI-741760">
        <id>P49789</id>
    </interactant>
    <interactant intactId="EBI-741760">
        <id>P49789</id>
        <label>FHIT</label>
    </interactant>
    <organismsDiffer>false</organismsDiffer>
    <experiments>13</experiments>
</comment>
<comment type="interaction">
    <interactant intactId="EBI-741760">
        <id>P49789</id>
    </interactant>
    <interactant intactId="EBI-926131">
        <id>Q9UJU2</id>
        <label>LEF1</label>
    </interactant>
    <organismsDiffer>false</organismsDiffer>
    <experiments>2</experiments>
</comment>
<comment type="subcellular location">
    <subcellularLocation>
        <location evidence="5 7">Cytoplasm</location>
    </subcellularLocation>
    <subcellularLocation>
        <location evidence="11">Mitochondrion</location>
    </subcellularLocation>
    <subcellularLocation>
        <location evidence="7">Nucleus</location>
    </subcellularLocation>
</comment>
<comment type="tissue specificity">
    <text>Low levels expressed in all tissues tested. Phospho-FHIT observed in liver and kidney, but not in brain and lung. Phospho-FHIT undetected in all tested human tumor cell lines.</text>
</comment>
<comment type="PTM">
    <text evidence="5">Phosphorylation at Tyr-114 by SRC is required for induction of apoptosis.</text>
</comment>
<comment type="mass spectrometry" mass="16733.0" method="MALDI" evidence="5"/>
<comment type="disease">
    <text evidence="5">A chromosomal aberration involving FHIT has been found in a lymphoblastoid cell line established from a family with renal cell carcinoma and thyroid carcinoma. Translocation t(3;8)(p14.2;q24.1) with RNF139. Although the 3p14.2 breakpoint has been shown to interrupt FHIT in its 5-prime non-coding region, it is unlikely that FHIT is causally related to renal or other malignancies.</text>
</comment>
<comment type="disease">
    <text evidence="5">Associated with digestive tract cancers. Numerous tumor types are found to have aberrant forms of FHIT protein due to deletions in a coding region of chromosome 3p14.2 including the fragile site locus FRA3B.</text>
</comment>
<comment type="online information" name="Atlas of Genetics and Cytogenetics in Oncology and Haematology">
    <link uri="https://atlasgeneticsoncology.org/gene/192/FHIT"/>
</comment>
<dbReference type="EC" id="3.6.1.29" evidence="4 6 13 15 16 17"/>
<dbReference type="EC" id="3.9.1.-" evidence="10"/>
<dbReference type="EC" id="3.6.2.1" evidence="10"/>
<dbReference type="EC" id="2.7.7.51" evidence="12"/>
<dbReference type="EMBL" id="U46922">
    <property type="protein sequence ID" value="AAA99013.1"/>
    <property type="molecule type" value="mRNA"/>
</dbReference>
<dbReference type="EMBL" id="U76271">
    <property type="protein sequence ID" value="AAB52539.1"/>
    <property type="molecule type" value="Genomic_DNA"/>
</dbReference>
<dbReference type="EMBL" id="U76267">
    <property type="protein sequence ID" value="AAB52539.1"/>
    <property type="status" value="JOINED"/>
    <property type="molecule type" value="Genomic_DNA"/>
</dbReference>
<dbReference type="EMBL" id="U76268">
    <property type="protein sequence ID" value="AAB52539.1"/>
    <property type="status" value="JOINED"/>
    <property type="molecule type" value="Genomic_DNA"/>
</dbReference>
<dbReference type="EMBL" id="U76269">
    <property type="protein sequence ID" value="AAB52539.1"/>
    <property type="status" value="JOINED"/>
    <property type="molecule type" value="Genomic_DNA"/>
</dbReference>
<dbReference type="EMBL" id="U76270">
    <property type="protein sequence ID" value="AAB52539.1"/>
    <property type="status" value="JOINED"/>
    <property type="molecule type" value="Genomic_DNA"/>
</dbReference>
<dbReference type="EMBL" id="KJ534835">
    <property type="protein sequence ID" value="AHW56475.1"/>
    <property type="molecule type" value="mRNA"/>
</dbReference>
<dbReference type="EMBL" id="AY625256">
    <property type="protein sequence ID" value="AAT37530.1"/>
    <property type="molecule type" value="Genomic_DNA"/>
</dbReference>
<dbReference type="EMBL" id="DQ120721">
    <property type="protein sequence ID" value="AAZ23623.1"/>
    <property type="molecule type" value="mRNA"/>
</dbReference>
<dbReference type="EMBL" id="EF186677">
    <property type="protein sequence ID" value="ABM65879.1"/>
    <property type="molecule type" value="Genomic_DNA"/>
</dbReference>
<dbReference type="EMBL" id="EF183457">
    <property type="protein sequence ID" value="ABM66086.1"/>
    <property type="molecule type" value="Genomic_DNA"/>
</dbReference>
<dbReference type="EMBL" id="EF183458">
    <property type="protein sequence ID" value="ABM66087.1"/>
    <property type="molecule type" value="Genomic_DNA"/>
</dbReference>
<dbReference type="EMBL" id="EF183459">
    <property type="protein sequence ID" value="ABM66088.1"/>
    <property type="molecule type" value="Genomic_DNA"/>
</dbReference>
<dbReference type="EMBL" id="EF183461">
    <property type="protein sequence ID" value="ABM66090.1"/>
    <property type="molecule type" value="Genomic_DNA"/>
</dbReference>
<dbReference type="EMBL" id="EF183464">
    <property type="protein sequence ID" value="ABM66093.1"/>
    <property type="molecule type" value="Genomic_DNA"/>
</dbReference>
<dbReference type="EMBL" id="AK289824">
    <property type="protein sequence ID" value="BAF82513.1"/>
    <property type="molecule type" value="mRNA"/>
</dbReference>
<dbReference type="EMBL" id="CH471055">
    <property type="protein sequence ID" value="EAW65393.1"/>
    <property type="molecule type" value="Genomic_DNA"/>
</dbReference>
<dbReference type="EMBL" id="BC032336">
    <property type="protein sequence ID" value="AAH32336.1"/>
    <property type="molecule type" value="mRNA"/>
</dbReference>
<dbReference type="CCDS" id="CCDS2894.1"/>
<dbReference type="PIR" id="A58802">
    <property type="entry name" value="A58802"/>
</dbReference>
<dbReference type="RefSeq" id="NP_001159715.1">
    <property type="nucleotide sequence ID" value="NM_001166243.3"/>
</dbReference>
<dbReference type="RefSeq" id="NP_001307828.1">
    <property type="nucleotide sequence ID" value="NM_001320899.2"/>
</dbReference>
<dbReference type="RefSeq" id="NP_001307829.1">
    <property type="nucleotide sequence ID" value="NM_001320900.2"/>
</dbReference>
<dbReference type="RefSeq" id="NP_002003.1">
    <property type="nucleotide sequence ID" value="NM_002012.4"/>
</dbReference>
<dbReference type="PDB" id="1FHI">
    <property type="method" value="X-ray"/>
    <property type="resolution" value="3.10 A"/>
    <property type="chains" value="A=1-147"/>
</dbReference>
<dbReference type="PDB" id="1FIT">
    <property type="method" value="X-ray"/>
    <property type="resolution" value="1.85 A"/>
    <property type="chains" value="A=1-147"/>
</dbReference>
<dbReference type="PDB" id="2FHI">
    <property type="method" value="X-ray"/>
    <property type="resolution" value="2.60 A"/>
    <property type="chains" value="A=1-147"/>
</dbReference>
<dbReference type="PDB" id="2FIT">
    <property type="method" value="X-ray"/>
    <property type="resolution" value="1.90 A"/>
    <property type="chains" value="A=1-147"/>
</dbReference>
<dbReference type="PDB" id="3FIT">
    <property type="method" value="X-ray"/>
    <property type="resolution" value="2.40 A"/>
    <property type="chains" value="A=1-147"/>
</dbReference>
<dbReference type="PDB" id="4FIT">
    <property type="method" value="X-ray"/>
    <property type="resolution" value="2.50 A"/>
    <property type="chains" value="A=1-147"/>
</dbReference>
<dbReference type="PDB" id="5FIT">
    <property type="method" value="X-ray"/>
    <property type="resolution" value="2.30 A"/>
    <property type="chains" value="A=1-147"/>
</dbReference>
<dbReference type="PDB" id="6FIT">
    <property type="method" value="X-ray"/>
    <property type="resolution" value="2.60 A"/>
    <property type="chains" value="A=1-147"/>
</dbReference>
<dbReference type="PDB" id="7P8P">
    <property type="method" value="X-ray"/>
    <property type="resolution" value="2.34 A"/>
    <property type="chains" value="A/B/C/D=1-147"/>
</dbReference>
<dbReference type="PDBsum" id="1FHI"/>
<dbReference type="PDBsum" id="1FIT"/>
<dbReference type="PDBsum" id="2FHI"/>
<dbReference type="PDBsum" id="2FIT"/>
<dbReference type="PDBsum" id="3FIT"/>
<dbReference type="PDBsum" id="4FIT"/>
<dbReference type="PDBsum" id="5FIT"/>
<dbReference type="PDBsum" id="6FIT"/>
<dbReference type="PDBsum" id="7P8P"/>
<dbReference type="SMR" id="P49789"/>
<dbReference type="BioGRID" id="108563">
    <property type="interactions" value="22"/>
</dbReference>
<dbReference type="DIP" id="DIP-29947N"/>
<dbReference type="FunCoup" id="P49789">
    <property type="interactions" value="793"/>
</dbReference>
<dbReference type="IntAct" id="P49789">
    <property type="interactions" value="13"/>
</dbReference>
<dbReference type="STRING" id="9606.ENSP00000418582"/>
<dbReference type="BindingDB" id="P49789"/>
<dbReference type="ChEMBL" id="CHEMBL1795151"/>
<dbReference type="DrugBank" id="DB02373">
    <property type="generic name" value="Adenosine monotungstate"/>
</dbReference>
<dbReference type="DrugBank" id="DB04389">
    <property type="generic name" value="Ado-P-Ch2-P-Ps-Ado"/>
</dbReference>
<dbReference type="iPTMnet" id="P49789"/>
<dbReference type="PhosphoSitePlus" id="P49789"/>
<dbReference type="BioMuta" id="FHIT"/>
<dbReference type="DMDM" id="1706794"/>
<dbReference type="jPOST" id="P49789"/>
<dbReference type="MassIVE" id="P49789"/>
<dbReference type="PaxDb" id="9606-ENSP00000417480"/>
<dbReference type="PeptideAtlas" id="P49789"/>
<dbReference type="ProteomicsDB" id="56119"/>
<dbReference type="Pumba" id="P49789"/>
<dbReference type="Antibodypedia" id="3636">
    <property type="antibodies" value="631 antibodies from 39 providers"/>
</dbReference>
<dbReference type="DNASU" id="2272"/>
<dbReference type="Ensembl" id="ENST00000468189.5">
    <property type="protein sequence ID" value="ENSP00000417480.1"/>
    <property type="gene ID" value="ENSG00000189283.11"/>
</dbReference>
<dbReference type="Ensembl" id="ENST00000476844.5">
    <property type="protein sequence ID" value="ENSP00000417557.1"/>
    <property type="gene ID" value="ENSG00000189283.11"/>
</dbReference>
<dbReference type="Ensembl" id="ENST00000492590.6">
    <property type="protein sequence ID" value="ENSP00000418582.1"/>
    <property type="gene ID" value="ENSG00000189283.11"/>
</dbReference>
<dbReference type="GeneID" id="2272"/>
<dbReference type="KEGG" id="hsa:2272"/>
<dbReference type="MANE-Select" id="ENST00000492590.6">
    <property type="protein sequence ID" value="ENSP00000418582.1"/>
    <property type="RefSeq nucleotide sequence ID" value="NM_002012.4"/>
    <property type="RefSeq protein sequence ID" value="NP_002003.1"/>
</dbReference>
<dbReference type="UCSC" id="uc003dkx.5">
    <property type="organism name" value="human"/>
</dbReference>
<dbReference type="AGR" id="HGNC:3701"/>
<dbReference type="CTD" id="2272"/>
<dbReference type="DisGeNET" id="2272"/>
<dbReference type="GeneCards" id="FHIT"/>
<dbReference type="HGNC" id="HGNC:3701">
    <property type="gene designation" value="FHIT"/>
</dbReference>
<dbReference type="HPA" id="ENSG00000189283">
    <property type="expression patterns" value="Tissue enriched (choroid)"/>
</dbReference>
<dbReference type="MalaCards" id="FHIT"/>
<dbReference type="MIM" id="601153">
    <property type="type" value="gene"/>
</dbReference>
<dbReference type="neXtProt" id="NX_P49789"/>
<dbReference type="OpenTargets" id="ENSG00000189283"/>
<dbReference type="Orphanet" id="422526">
    <property type="disease" value="Hereditary clear cell renal cell carcinoma"/>
</dbReference>
<dbReference type="PharmGKB" id="PA28140"/>
<dbReference type="VEuPathDB" id="HostDB:ENSG00000189283"/>
<dbReference type="eggNOG" id="KOG3379">
    <property type="taxonomic scope" value="Eukaryota"/>
</dbReference>
<dbReference type="GeneTree" id="ENSGT00510000047967"/>
<dbReference type="HOGENOM" id="CLU_056776_7_1_1"/>
<dbReference type="InParanoid" id="P49789"/>
<dbReference type="OMA" id="DAIYGMM"/>
<dbReference type="OrthoDB" id="680339at2759"/>
<dbReference type="PAN-GO" id="P49789">
    <property type="GO annotations" value="9 GO annotations based on evolutionary models"/>
</dbReference>
<dbReference type="PhylomeDB" id="P49789"/>
<dbReference type="TreeFam" id="TF105432"/>
<dbReference type="BRENDA" id="3.6.1.29">
    <property type="organism ID" value="2681"/>
</dbReference>
<dbReference type="PathwayCommons" id="P49789"/>
<dbReference type="SABIO-RK" id="P49789"/>
<dbReference type="SignaLink" id="P49789"/>
<dbReference type="SIGNOR" id="P49789"/>
<dbReference type="BioGRID-ORCS" id="2272">
    <property type="hits" value="11 hits in 1158 CRISPR screens"/>
</dbReference>
<dbReference type="ChiTaRS" id="FHIT">
    <property type="organism name" value="human"/>
</dbReference>
<dbReference type="EvolutionaryTrace" id="P49789"/>
<dbReference type="GeneWiki" id="FHIT"/>
<dbReference type="GenomeRNAi" id="2272"/>
<dbReference type="Pharos" id="P49789">
    <property type="development level" value="Tchem"/>
</dbReference>
<dbReference type="PRO" id="PR:P49789"/>
<dbReference type="Proteomes" id="UP000005640">
    <property type="component" value="Chromosome 3"/>
</dbReference>
<dbReference type="RNAct" id="P49789">
    <property type="molecule type" value="protein"/>
</dbReference>
<dbReference type="Bgee" id="ENSG00000189283">
    <property type="expression patterns" value="Expressed in right adrenal gland and 111 other cell types or tissues"/>
</dbReference>
<dbReference type="ExpressionAtlas" id="P49789">
    <property type="expression patterns" value="baseline and differential"/>
</dbReference>
<dbReference type="GO" id="GO:0005737">
    <property type="term" value="C:cytoplasm"/>
    <property type="evidence" value="ECO:0000314"/>
    <property type="project" value="UniProtKB"/>
</dbReference>
<dbReference type="GO" id="GO:0005829">
    <property type="term" value="C:cytosol"/>
    <property type="evidence" value="ECO:0000314"/>
    <property type="project" value="UniProtKB"/>
</dbReference>
<dbReference type="GO" id="GO:0001650">
    <property type="term" value="C:fibrillar center"/>
    <property type="evidence" value="ECO:0000314"/>
    <property type="project" value="HPA"/>
</dbReference>
<dbReference type="GO" id="GO:0005739">
    <property type="term" value="C:mitochondrion"/>
    <property type="evidence" value="ECO:0006056"/>
    <property type="project" value="FlyBase"/>
</dbReference>
<dbReference type="GO" id="GO:0005634">
    <property type="term" value="C:nucleus"/>
    <property type="evidence" value="ECO:0000318"/>
    <property type="project" value="GO_Central"/>
</dbReference>
<dbReference type="GO" id="GO:0005886">
    <property type="term" value="C:plasma membrane"/>
    <property type="evidence" value="ECO:0000314"/>
    <property type="project" value="HPA"/>
</dbReference>
<dbReference type="GO" id="GO:0043530">
    <property type="term" value="F:adenosine 5'-monophosphoramidase activity"/>
    <property type="evidence" value="ECO:0000314"/>
    <property type="project" value="UniProtKB"/>
</dbReference>
<dbReference type="GO" id="GO:0047627">
    <property type="term" value="F:adenylylsulfatase activity"/>
    <property type="evidence" value="ECO:0000314"/>
    <property type="project" value="UniProtKB"/>
</dbReference>
<dbReference type="GO" id="GO:0047352">
    <property type="term" value="F:adenylylsulfate-ammonia adenylyltransferase activity"/>
    <property type="evidence" value="ECO:0000314"/>
    <property type="project" value="UniProtKB"/>
</dbReference>
<dbReference type="GO" id="GO:0047710">
    <property type="term" value="F:bis(5'-adenosyl)-triphosphatase activity"/>
    <property type="evidence" value="ECO:0000314"/>
    <property type="project" value="UniProtKB"/>
</dbReference>
<dbReference type="GO" id="GO:0042802">
    <property type="term" value="F:identical protein binding"/>
    <property type="evidence" value="ECO:0000353"/>
    <property type="project" value="IntAct"/>
</dbReference>
<dbReference type="GO" id="GO:0000166">
    <property type="term" value="F:nucleotide binding"/>
    <property type="evidence" value="ECO:0007669"/>
    <property type="project" value="UniProtKB-KW"/>
</dbReference>
<dbReference type="GO" id="GO:0031625">
    <property type="term" value="F:ubiquitin protein ligase binding"/>
    <property type="evidence" value="ECO:0000353"/>
    <property type="project" value="UniProtKB"/>
</dbReference>
<dbReference type="GO" id="GO:0015964">
    <property type="term" value="P:diadenosine triphosphate catabolic process"/>
    <property type="evidence" value="ECO:0000314"/>
    <property type="project" value="UniProtKB"/>
</dbReference>
<dbReference type="GO" id="GO:0072332">
    <property type="term" value="P:intrinsic apoptotic signaling pathway by p53 class mediator"/>
    <property type="evidence" value="ECO:0000315"/>
    <property type="project" value="UniProtKB"/>
</dbReference>
<dbReference type="GO" id="GO:0032435">
    <property type="term" value="P:negative regulation of proteasomal ubiquitin-dependent protein catabolic process"/>
    <property type="evidence" value="ECO:0000315"/>
    <property type="project" value="UniProtKB"/>
</dbReference>
<dbReference type="GO" id="GO:0006163">
    <property type="term" value="P:purine nucleotide metabolic process"/>
    <property type="evidence" value="ECO:0000314"/>
    <property type="project" value="UniProtKB"/>
</dbReference>
<dbReference type="CDD" id="cd01275">
    <property type="entry name" value="FHIT"/>
    <property type="match status" value="1"/>
</dbReference>
<dbReference type="FunFam" id="3.30.428.10:FF:000011">
    <property type="entry name" value="Fragile histidine triad"/>
    <property type="match status" value="1"/>
</dbReference>
<dbReference type="Gene3D" id="3.30.428.10">
    <property type="entry name" value="HIT-like"/>
    <property type="match status" value="1"/>
</dbReference>
<dbReference type="InterPro" id="IPR052677">
    <property type="entry name" value="Dinucleoside_ppp_hydrolase"/>
</dbReference>
<dbReference type="InterPro" id="IPR039383">
    <property type="entry name" value="FHIT"/>
</dbReference>
<dbReference type="InterPro" id="IPR019808">
    <property type="entry name" value="Histidine_triad_CS"/>
</dbReference>
<dbReference type="InterPro" id="IPR011146">
    <property type="entry name" value="HIT-like"/>
</dbReference>
<dbReference type="InterPro" id="IPR036265">
    <property type="entry name" value="HIT-like_sf"/>
</dbReference>
<dbReference type="PANTHER" id="PTHR46981">
    <property type="entry name" value="BIS(5'-ADENOSYL)-TRIPHOSPHATASE"/>
    <property type="match status" value="1"/>
</dbReference>
<dbReference type="PANTHER" id="PTHR46981:SF1">
    <property type="entry name" value="BIS(5'-ADENOSYL)-TRIPHOSPHATASE"/>
    <property type="match status" value="1"/>
</dbReference>
<dbReference type="Pfam" id="PF01230">
    <property type="entry name" value="HIT"/>
    <property type="match status" value="1"/>
</dbReference>
<dbReference type="SUPFAM" id="SSF54197">
    <property type="entry name" value="HIT-like"/>
    <property type="match status" value="1"/>
</dbReference>
<dbReference type="PROSITE" id="PS00892">
    <property type="entry name" value="HIT_1"/>
    <property type="match status" value="1"/>
</dbReference>
<dbReference type="PROSITE" id="PS51084">
    <property type="entry name" value="HIT_2"/>
    <property type="match status" value="1"/>
</dbReference>
<proteinExistence type="evidence at protein level"/>
<protein>
    <recommendedName>
        <fullName>Bis(5'-adenosyl)-triphosphatase</fullName>
        <ecNumber evidence="4 6 13 15 16 17">3.6.1.29</ecNumber>
    </recommendedName>
    <alternativeName>
        <fullName>AP3A hydrolase</fullName>
        <shortName>AP3Aase</shortName>
    </alternativeName>
    <alternativeName>
        <fullName evidence="19">Adenosine 5'-monophosphoramidase FHIT</fullName>
        <ecNumber evidence="10">3.9.1.-</ecNumber>
    </alternativeName>
    <alternativeName>
        <fullName>Adenylylsulfatase</fullName>
        <ecNumber evidence="10">3.6.2.1</ecNumber>
    </alternativeName>
    <alternativeName>
        <fullName>Adenylylsulfate-ammonia adenylyltransferase</fullName>
        <ecNumber evidence="12">2.7.7.51</ecNumber>
    </alternativeName>
    <alternativeName>
        <fullName>Diadenosine 5',5'''-P1,P3-triphosphate hydrolase</fullName>
    </alternativeName>
    <alternativeName>
        <fullName>Dinucleosidetriphosphatase</fullName>
    </alternativeName>
    <alternativeName>
        <fullName>Fragile histidine triad protein</fullName>
    </alternativeName>
</protein>
<accession>P49789</accession>
<accession>A2IAS9</accession>
<accession>A2IAT0</accession>
<accession>A2IAT6</accession>
<accession>A8K1A9</accession>
<accession>Q45QG9</accession>
<accession>Q6IU12</accession>